<name>MNTP_SHISS</name>
<reference key="1">
    <citation type="journal article" date="2005" name="Nucleic Acids Res.">
        <title>Genome dynamics and diversity of Shigella species, the etiologic agents of bacillary dysentery.</title>
        <authorList>
            <person name="Yang F."/>
            <person name="Yang J."/>
            <person name="Zhang X."/>
            <person name="Chen L."/>
            <person name="Jiang Y."/>
            <person name="Yan Y."/>
            <person name="Tang X."/>
            <person name="Wang J."/>
            <person name="Xiong Z."/>
            <person name="Dong J."/>
            <person name="Xue Y."/>
            <person name="Zhu Y."/>
            <person name="Xu X."/>
            <person name="Sun L."/>
            <person name="Chen S."/>
            <person name="Nie H."/>
            <person name="Peng J."/>
            <person name="Xu J."/>
            <person name="Wang Y."/>
            <person name="Yuan Z."/>
            <person name="Wen Y."/>
            <person name="Yao Z."/>
            <person name="Shen Y."/>
            <person name="Qiang B."/>
            <person name="Hou Y."/>
            <person name="Yu J."/>
            <person name="Jin Q."/>
        </authorList>
    </citation>
    <scope>NUCLEOTIDE SEQUENCE [LARGE SCALE GENOMIC DNA]</scope>
    <source>
        <strain>Ss046</strain>
    </source>
</reference>
<feature type="chain" id="PRO_0000292546" description="Probable manganese efflux pump MntP">
    <location>
        <begin position="1"/>
        <end position="188"/>
    </location>
</feature>
<feature type="transmembrane region" description="Helical" evidence="1">
    <location>
        <begin position="3"/>
        <end position="23"/>
    </location>
</feature>
<feature type="transmembrane region" description="Helical" evidence="1">
    <location>
        <begin position="66"/>
        <end position="86"/>
    </location>
</feature>
<feature type="transmembrane region" description="Helical" evidence="1">
    <location>
        <begin position="106"/>
        <end position="128"/>
    </location>
</feature>
<feature type="transmembrane region" description="Helical" evidence="1">
    <location>
        <begin position="143"/>
        <end position="163"/>
    </location>
</feature>
<feature type="transmembrane region" description="Helical" evidence="1">
    <location>
        <begin position="168"/>
        <end position="188"/>
    </location>
</feature>
<organism>
    <name type="scientific">Shigella sonnei (strain Ss046)</name>
    <dbReference type="NCBI Taxonomy" id="300269"/>
    <lineage>
        <taxon>Bacteria</taxon>
        <taxon>Pseudomonadati</taxon>
        <taxon>Pseudomonadota</taxon>
        <taxon>Gammaproteobacteria</taxon>
        <taxon>Enterobacterales</taxon>
        <taxon>Enterobacteriaceae</taxon>
        <taxon>Shigella</taxon>
    </lineage>
</organism>
<sequence>MNITATVLLAFGMSMDAFAASVGKGATLHKPKFSEALRTGLIFGAVETLTPLIGWGMGMLASRFVLEWNHWIAFVLLIFLGGRMIIEGFRGADDEDEEPRRRHGFWLLVTTAIATSLDAMAVGVGLAFLQVNIIATALAIGCATLIMSTLGMMVGRFIGSIIGKKAEILGGLVLIGIGVQILWTHFHG</sequence>
<comment type="function">
    <text evidence="1">Probably functions as a manganese efflux pump.</text>
</comment>
<comment type="subcellular location">
    <subcellularLocation>
        <location evidence="1">Cell inner membrane</location>
        <topology evidence="1">Multi-pass membrane protein</topology>
    </subcellularLocation>
</comment>
<comment type="similarity">
    <text evidence="1">Belongs to the MntP (TC 9.B.29) family.</text>
</comment>
<comment type="sequence caution" evidence="2">
    <conflict type="erroneous initiation">
        <sequence resource="EMBL-CDS" id="AAZ88050"/>
    </conflict>
</comment>
<protein>
    <recommendedName>
        <fullName evidence="1">Probable manganese efflux pump MntP</fullName>
    </recommendedName>
</protein>
<dbReference type="EMBL" id="CP000038">
    <property type="protein sequence ID" value="AAZ88050.1"/>
    <property type="status" value="ALT_INIT"/>
    <property type="molecule type" value="Genomic_DNA"/>
</dbReference>
<dbReference type="RefSeq" id="WP_024261431.1">
    <property type="nucleotide sequence ID" value="NC_007384.1"/>
</dbReference>
<dbReference type="KEGG" id="ssn:SSON_1339"/>
<dbReference type="HOGENOM" id="CLU_096410_0_0_6"/>
<dbReference type="Proteomes" id="UP000002529">
    <property type="component" value="Chromosome"/>
</dbReference>
<dbReference type="GO" id="GO:0005886">
    <property type="term" value="C:plasma membrane"/>
    <property type="evidence" value="ECO:0007669"/>
    <property type="project" value="UniProtKB-SubCell"/>
</dbReference>
<dbReference type="GO" id="GO:0005384">
    <property type="term" value="F:manganese ion transmembrane transporter activity"/>
    <property type="evidence" value="ECO:0007669"/>
    <property type="project" value="UniProtKB-UniRule"/>
</dbReference>
<dbReference type="HAMAP" id="MF_01521">
    <property type="entry name" value="MntP_pump"/>
    <property type="match status" value="1"/>
</dbReference>
<dbReference type="InterPro" id="IPR003810">
    <property type="entry name" value="Mntp/YtaF"/>
</dbReference>
<dbReference type="InterPro" id="IPR022929">
    <property type="entry name" value="Put_MntP"/>
</dbReference>
<dbReference type="NCBIfam" id="NF008546">
    <property type="entry name" value="PRK11469.1"/>
    <property type="match status" value="1"/>
</dbReference>
<dbReference type="PANTHER" id="PTHR35529">
    <property type="entry name" value="MANGANESE EFFLUX PUMP MNTP-RELATED"/>
    <property type="match status" value="1"/>
</dbReference>
<dbReference type="PANTHER" id="PTHR35529:SF1">
    <property type="entry name" value="MANGANESE EFFLUX PUMP MNTP-RELATED"/>
    <property type="match status" value="1"/>
</dbReference>
<dbReference type="Pfam" id="PF02659">
    <property type="entry name" value="Mntp"/>
    <property type="match status" value="1"/>
</dbReference>
<keyword id="KW-0997">Cell inner membrane</keyword>
<keyword id="KW-1003">Cell membrane</keyword>
<keyword id="KW-0406">Ion transport</keyword>
<keyword id="KW-0464">Manganese</keyword>
<keyword id="KW-0472">Membrane</keyword>
<keyword id="KW-1185">Reference proteome</keyword>
<keyword id="KW-0812">Transmembrane</keyword>
<keyword id="KW-1133">Transmembrane helix</keyword>
<keyword id="KW-0813">Transport</keyword>
<gene>
    <name evidence="1" type="primary">mntP</name>
    <name type="synonym">yebN</name>
    <name type="ordered locus">SSON_1339</name>
</gene>
<proteinExistence type="inferred from homology"/>
<accession>Q3Z2G2</accession>
<evidence type="ECO:0000255" key="1">
    <source>
        <dbReference type="HAMAP-Rule" id="MF_01521"/>
    </source>
</evidence>
<evidence type="ECO:0000305" key="2"/>